<protein>
    <recommendedName>
        <fullName evidence="1">3-methyl-2-oxobutanoate hydroxymethyltransferase</fullName>
        <ecNumber evidence="1">2.1.2.11</ecNumber>
    </recommendedName>
    <alternativeName>
        <fullName evidence="1">Ketopantoate hydroxymethyltransferase</fullName>
        <shortName evidence="1">KPHMT</shortName>
    </alternativeName>
</protein>
<keyword id="KW-0963">Cytoplasm</keyword>
<keyword id="KW-0460">Magnesium</keyword>
<keyword id="KW-0479">Metal-binding</keyword>
<keyword id="KW-0566">Pantothenate biosynthesis</keyword>
<keyword id="KW-1185">Reference proteome</keyword>
<keyword id="KW-0808">Transferase</keyword>
<organism>
    <name type="scientific">Bordetella pertussis (strain Tohama I / ATCC BAA-589 / NCTC 13251)</name>
    <dbReference type="NCBI Taxonomy" id="257313"/>
    <lineage>
        <taxon>Bacteria</taxon>
        <taxon>Pseudomonadati</taxon>
        <taxon>Pseudomonadota</taxon>
        <taxon>Betaproteobacteria</taxon>
        <taxon>Burkholderiales</taxon>
        <taxon>Alcaligenaceae</taxon>
        <taxon>Bordetella</taxon>
    </lineage>
</organism>
<proteinExistence type="inferred from homology"/>
<evidence type="ECO:0000255" key="1">
    <source>
        <dbReference type="HAMAP-Rule" id="MF_00156"/>
    </source>
</evidence>
<sequence length="278" mass="29189">MSVPTAAKRITTRQLRMRTPDEPIVALTAYTAPIAGLLDAHCDLLLVGDSLGMVIYGMETTLPVTVDMMIQHGRAVMRGSQRACVAVDMPFGSYQEDERQAYRNAARIMAETGASCVKLEGGAEMASTVAFLVERGIPVMGHVGLKPQSVHGHGGFRTVGRGAEAEQVMADAQAIAAAGAFTVVIEGTLEPVARAITEALPVPTIGIGASPACGGQILVSDDVLGLFSDFTPRFVKRYAQLGPIIEQAAAAYASEVRARTFPAPEHCTGMPAPDGRPA</sequence>
<reference key="1">
    <citation type="journal article" date="2003" name="Nat. Genet.">
        <title>Comparative analysis of the genome sequences of Bordetella pertussis, Bordetella parapertussis and Bordetella bronchiseptica.</title>
        <authorList>
            <person name="Parkhill J."/>
            <person name="Sebaihia M."/>
            <person name="Preston A."/>
            <person name="Murphy L.D."/>
            <person name="Thomson N.R."/>
            <person name="Harris D.E."/>
            <person name="Holden M.T.G."/>
            <person name="Churcher C.M."/>
            <person name="Bentley S.D."/>
            <person name="Mungall K.L."/>
            <person name="Cerdeno-Tarraga A.-M."/>
            <person name="Temple L."/>
            <person name="James K.D."/>
            <person name="Harris B."/>
            <person name="Quail M.A."/>
            <person name="Achtman M."/>
            <person name="Atkin R."/>
            <person name="Baker S."/>
            <person name="Basham D."/>
            <person name="Bason N."/>
            <person name="Cherevach I."/>
            <person name="Chillingworth T."/>
            <person name="Collins M."/>
            <person name="Cronin A."/>
            <person name="Davis P."/>
            <person name="Doggett J."/>
            <person name="Feltwell T."/>
            <person name="Goble A."/>
            <person name="Hamlin N."/>
            <person name="Hauser H."/>
            <person name="Holroyd S."/>
            <person name="Jagels K."/>
            <person name="Leather S."/>
            <person name="Moule S."/>
            <person name="Norberczak H."/>
            <person name="O'Neil S."/>
            <person name="Ormond D."/>
            <person name="Price C."/>
            <person name="Rabbinowitsch E."/>
            <person name="Rutter S."/>
            <person name="Sanders M."/>
            <person name="Saunders D."/>
            <person name="Seeger K."/>
            <person name="Sharp S."/>
            <person name="Simmonds M."/>
            <person name="Skelton J."/>
            <person name="Squares R."/>
            <person name="Squares S."/>
            <person name="Stevens K."/>
            <person name="Unwin L."/>
            <person name="Whitehead S."/>
            <person name="Barrell B.G."/>
            <person name="Maskell D.J."/>
        </authorList>
    </citation>
    <scope>NUCLEOTIDE SEQUENCE [LARGE SCALE GENOMIC DNA]</scope>
    <source>
        <strain>Tohama I / ATCC BAA-589 / NCTC 13251</strain>
    </source>
</reference>
<feature type="chain" id="PRO_0000184823" description="3-methyl-2-oxobutanoate hydroxymethyltransferase">
    <location>
        <begin position="1"/>
        <end position="278"/>
    </location>
</feature>
<feature type="active site" description="Proton acceptor" evidence="1">
    <location>
        <position position="186"/>
    </location>
</feature>
<feature type="binding site" evidence="1">
    <location>
        <begin position="49"/>
        <end position="50"/>
    </location>
    <ligand>
        <name>3-methyl-2-oxobutanoate</name>
        <dbReference type="ChEBI" id="CHEBI:11851"/>
    </ligand>
</feature>
<feature type="binding site" evidence="1">
    <location>
        <position position="49"/>
    </location>
    <ligand>
        <name>Mg(2+)</name>
        <dbReference type="ChEBI" id="CHEBI:18420"/>
    </ligand>
</feature>
<feature type="binding site" evidence="1">
    <location>
        <position position="88"/>
    </location>
    <ligand>
        <name>3-methyl-2-oxobutanoate</name>
        <dbReference type="ChEBI" id="CHEBI:11851"/>
    </ligand>
</feature>
<feature type="binding site" evidence="1">
    <location>
        <position position="88"/>
    </location>
    <ligand>
        <name>Mg(2+)</name>
        <dbReference type="ChEBI" id="CHEBI:18420"/>
    </ligand>
</feature>
<feature type="binding site" evidence="1">
    <location>
        <position position="118"/>
    </location>
    <ligand>
        <name>3-methyl-2-oxobutanoate</name>
        <dbReference type="ChEBI" id="CHEBI:11851"/>
    </ligand>
</feature>
<feature type="binding site" evidence="1">
    <location>
        <position position="120"/>
    </location>
    <ligand>
        <name>Mg(2+)</name>
        <dbReference type="ChEBI" id="CHEBI:18420"/>
    </ligand>
</feature>
<dbReference type="EC" id="2.1.2.11" evidence="1"/>
<dbReference type="EMBL" id="BX640419">
    <property type="protein sequence ID" value="CAE43122.1"/>
    <property type="molecule type" value="Genomic_DNA"/>
</dbReference>
<dbReference type="RefSeq" id="NP_881438.1">
    <property type="nucleotide sequence ID" value="NC_002929.2"/>
</dbReference>
<dbReference type="RefSeq" id="WP_003815281.1">
    <property type="nucleotide sequence ID" value="NZ_CP039022.1"/>
</dbReference>
<dbReference type="SMR" id="Q7VV53"/>
<dbReference type="STRING" id="257313.BP2850"/>
<dbReference type="PaxDb" id="257313-BP2850"/>
<dbReference type="GeneID" id="93205891"/>
<dbReference type="KEGG" id="bpe:BP2850"/>
<dbReference type="PATRIC" id="fig|257313.5.peg.3080"/>
<dbReference type="eggNOG" id="COG0413">
    <property type="taxonomic scope" value="Bacteria"/>
</dbReference>
<dbReference type="HOGENOM" id="CLU_036645_1_0_4"/>
<dbReference type="UniPathway" id="UPA00028">
    <property type="reaction ID" value="UER00003"/>
</dbReference>
<dbReference type="Proteomes" id="UP000002676">
    <property type="component" value="Chromosome"/>
</dbReference>
<dbReference type="GO" id="GO:0005737">
    <property type="term" value="C:cytoplasm"/>
    <property type="evidence" value="ECO:0007669"/>
    <property type="project" value="UniProtKB-SubCell"/>
</dbReference>
<dbReference type="GO" id="GO:0003864">
    <property type="term" value="F:3-methyl-2-oxobutanoate hydroxymethyltransferase activity"/>
    <property type="evidence" value="ECO:0007669"/>
    <property type="project" value="UniProtKB-UniRule"/>
</dbReference>
<dbReference type="GO" id="GO:0000287">
    <property type="term" value="F:magnesium ion binding"/>
    <property type="evidence" value="ECO:0007669"/>
    <property type="project" value="TreeGrafter"/>
</dbReference>
<dbReference type="GO" id="GO:0015940">
    <property type="term" value="P:pantothenate biosynthetic process"/>
    <property type="evidence" value="ECO:0007669"/>
    <property type="project" value="UniProtKB-UniRule"/>
</dbReference>
<dbReference type="CDD" id="cd06557">
    <property type="entry name" value="KPHMT-like"/>
    <property type="match status" value="1"/>
</dbReference>
<dbReference type="FunFam" id="3.20.20.60:FF:000003">
    <property type="entry name" value="3-methyl-2-oxobutanoate hydroxymethyltransferase"/>
    <property type="match status" value="1"/>
</dbReference>
<dbReference type="Gene3D" id="3.20.20.60">
    <property type="entry name" value="Phosphoenolpyruvate-binding domains"/>
    <property type="match status" value="1"/>
</dbReference>
<dbReference type="HAMAP" id="MF_00156">
    <property type="entry name" value="PanB"/>
    <property type="match status" value="1"/>
</dbReference>
<dbReference type="InterPro" id="IPR003700">
    <property type="entry name" value="Pantoate_hydroxy_MeTrfase"/>
</dbReference>
<dbReference type="InterPro" id="IPR015813">
    <property type="entry name" value="Pyrv/PenolPyrv_kinase-like_dom"/>
</dbReference>
<dbReference type="InterPro" id="IPR040442">
    <property type="entry name" value="Pyrv_kinase-like_dom_sf"/>
</dbReference>
<dbReference type="NCBIfam" id="TIGR00222">
    <property type="entry name" value="panB"/>
    <property type="match status" value="1"/>
</dbReference>
<dbReference type="NCBIfam" id="NF001452">
    <property type="entry name" value="PRK00311.1"/>
    <property type="match status" value="1"/>
</dbReference>
<dbReference type="PANTHER" id="PTHR20881">
    <property type="entry name" value="3-METHYL-2-OXOBUTANOATE HYDROXYMETHYLTRANSFERASE"/>
    <property type="match status" value="1"/>
</dbReference>
<dbReference type="PANTHER" id="PTHR20881:SF0">
    <property type="entry name" value="3-METHYL-2-OXOBUTANOATE HYDROXYMETHYLTRANSFERASE"/>
    <property type="match status" value="1"/>
</dbReference>
<dbReference type="Pfam" id="PF02548">
    <property type="entry name" value="Pantoate_transf"/>
    <property type="match status" value="1"/>
</dbReference>
<dbReference type="PIRSF" id="PIRSF000388">
    <property type="entry name" value="Pantoate_hydroxy_MeTrfase"/>
    <property type="match status" value="1"/>
</dbReference>
<dbReference type="SUPFAM" id="SSF51621">
    <property type="entry name" value="Phosphoenolpyruvate/pyruvate domain"/>
    <property type="match status" value="1"/>
</dbReference>
<gene>
    <name evidence="1" type="primary">panB</name>
    <name type="ordered locus">BP2850</name>
</gene>
<name>PANB_BORPE</name>
<accession>Q7VV53</accession>
<comment type="function">
    <text evidence="1">Catalyzes the reversible reaction in which hydroxymethyl group from 5,10-methylenetetrahydrofolate is transferred onto alpha-ketoisovalerate to form ketopantoate.</text>
</comment>
<comment type="catalytic activity">
    <reaction evidence="1">
        <text>3-methyl-2-oxobutanoate + (6R)-5,10-methylene-5,6,7,8-tetrahydrofolate + H2O = 2-dehydropantoate + (6S)-5,6,7,8-tetrahydrofolate</text>
        <dbReference type="Rhea" id="RHEA:11824"/>
        <dbReference type="ChEBI" id="CHEBI:11561"/>
        <dbReference type="ChEBI" id="CHEBI:11851"/>
        <dbReference type="ChEBI" id="CHEBI:15377"/>
        <dbReference type="ChEBI" id="CHEBI:15636"/>
        <dbReference type="ChEBI" id="CHEBI:57453"/>
        <dbReference type="EC" id="2.1.2.11"/>
    </reaction>
</comment>
<comment type="cofactor">
    <cofactor evidence="1">
        <name>Mg(2+)</name>
        <dbReference type="ChEBI" id="CHEBI:18420"/>
    </cofactor>
    <text evidence="1">Binds 1 Mg(2+) ion per subunit.</text>
</comment>
<comment type="pathway">
    <text evidence="1">Cofactor biosynthesis; (R)-pantothenate biosynthesis; (R)-pantoate from 3-methyl-2-oxobutanoate: step 1/2.</text>
</comment>
<comment type="subunit">
    <text evidence="1">Homodecamer; pentamer of dimers.</text>
</comment>
<comment type="subcellular location">
    <subcellularLocation>
        <location evidence="1">Cytoplasm</location>
    </subcellularLocation>
</comment>
<comment type="similarity">
    <text evidence="1">Belongs to the PanB family.</text>
</comment>